<sequence length="223" mass="24953">MGQKVHPHGLRVGVIKEWDAKWYADKKNFADNLVEDHKIRNFVKKNSYAAGVSRIEIERAAKRIKLNIYTAKPGMIIGKGGQGIESLKNKLQKIVSNKNILINIVEVKRPEADAQLIAENIAQQLEKRIAFRRAMKQSIQRAMKSGVKGIKTACSGRLAGAEIARTEHYNEGTIPLQTLRADIDYGFAEADTTYGKIGVKVWVYKGEVLPARKNINEKEEANA</sequence>
<name>RS3_CLOBM</name>
<reference key="1">
    <citation type="journal article" date="2007" name="PLoS ONE">
        <title>Analysis of the neurotoxin complex genes in Clostridium botulinum A1-A4 and B1 strains: BoNT/A3, /Ba4 and /B1 clusters are located within plasmids.</title>
        <authorList>
            <person name="Smith T.J."/>
            <person name="Hill K.K."/>
            <person name="Foley B.T."/>
            <person name="Detter J.C."/>
            <person name="Munk A.C."/>
            <person name="Bruce D.C."/>
            <person name="Doggett N.A."/>
            <person name="Smith L.A."/>
            <person name="Marks J.D."/>
            <person name="Xie G."/>
            <person name="Brettin T.S."/>
        </authorList>
    </citation>
    <scope>NUCLEOTIDE SEQUENCE [LARGE SCALE GENOMIC DNA]</scope>
    <source>
        <strain>Loch Maree / Type A3</strain>
    </source>
</reference>
<feature type="chain" id="PRO_1000140946" description="Small ribosomal subunit protein uS3">
    <location>
        <begin position="1"/>
        <end position="223"/>
    </location>
</feature>
<feature type="domain" description="KH type-2" evidence="1">
    <location>
        <begin position="39"/>
        <end position="108"/>
    </location>
</feature>
<evidence type="ECO:0000255" key="1">
    <source>
        <dbReference type="HAMAP-Rule" id="MF_01309"/>
    </source>
</evidence>
<evidence type="ECO:0000305" key="2"/>
<accession>B1KSL9</accession>
<organism>
    <name type="scientific">Clostridium botulinum (strain Loch Maree / Type A3)</name>
    <dbReference type="NCBI Taxonomy" id="498214"/>
    <lineage>
        <taxon>Bacteria</taxon>
        <taxon>Bacillati</taxon>
        <taxon>Bacillota</taxon>
        <taxon>Clostridia</taxon>
        <taxon>Eubacteriales</taxon>
        <taxon>Clostridiaceae</taxon>
        <taxon>Clostridium</taxon>
    </lineage>
</organism>
<keyword id="KW-0687">Ribonucleoprotein</keyword>
<keyword id="KW-0689">Ribosomal protein</keyword>
<keyword id="KW-0694">RNA-binding</keyword>
<keyword id="KW-0699">rRNA-binding</keyword>
<proteinExistence type="inferred from homology"/>
<dbReference type="EMBL" id="CP000962">
    <property type="protein sequence ID" value="ACA56294.1"/>
    <property type="molecule type" value="Genomic_DNA"/>
</dbReference>
<dbReference type="RefSeq" id="WP_012344185.1">
    <property type="nucleotide sequence ID" value="NC_010520.1"/>
</dbReference>
<dbReference type="SMR" id="B1KSL9"/>
<dbReference type="KEGG" id="cbl:CLK_2918"/>
<dbReference type="HOGENOM" id="CLU_058591_0_2_9"/>
<dbReference type="GO" id="GO:0022627">
    <property type="term" value="C:cytosolic small ribosomal subunit"/>
    <property type="evidence" value="ECO:0007669"/>
    <property type="project" value="TreeGrafter"/>
</dbReference>
<dbReference type="GO" id="GO:0003729">
    <property type="term" value="F:mRNA binding"/>
    <property type="evidence" value="ECO:0007669"/>
    <property type="project" value="UniProtKB-UniRule"/>
</dbReference>
<dbReference type="GO" id="GO:0019843">
    <property type="term" value="F:rRNA binding"/>
    <property type="evidence" value="ECO:0007669"/>
    <property type="project" value="UniProtKB-UniRule"/>
</dbReference>
<dbReference type="GO" id="GO:0003735">
    <property type="term" value="F:structural constituent of ribosome"/>
    <property type="evidence" value="ECO:0007669"/>
    <property type="project" value="InterPro"/>
</dbReference>
<dbReference type="GO" id="GO:0006412">
    <property type="term" value="P:translation"/>
    <property type="evidence" value="ECO:0007669"/>
    <property type="project" value="UniProtKB-UniRule"/>
</dbReference>
<dbReference type="CDD" id="cd02412">
    <property type="entry name" value="KH-II_30S_S3"/>
    <property type="match status" value="1"/>
</dbReference>
<dbReference type="FunFam" id="3.30.1140.32:FF:000002">
    <property type="entry name" value="30S ribosomal protein S3"/>
    <property type="match status" value="1"/>
</dbReference>
<dbReference type="FunFam" id="3.30.300.20:FF:000001">
    <property type="entry name" value="30S ribosomal protein S3"/>
    <property type="match status" value="1"/>
</dbReference>
<dbReference type="Gene3D" id="3.30.300.20">
    <property type="match status" value="1"/>
</dbReference>
<dbReference type="Gene3D" id="3.30.1140.32">
    <property type="entry name" value="Ribosomal protein S3, C-terminal domain"/>
    <property type="match status" value="1"/>
</dbReference>
<dbReference type="HAMAP" id="MF_01309_B">
    <property type="entry name" value="Ribosomal_uS3_B"/>
    <property type="match status" value="1"/>
</dbReference>
<dbReference type="InterPro" id="IPR004087">
    <property type="entry name" value="KH_dom"/>
</dbReference>
<dbReference type="InterPro" id="IPR015946">
    <property type="entry name" value="KH_dom-like_a/b"/>
</dbReference>
<dbReference type="InterPro" id="IPR004044">
    <property type="entry name" value="KH_dom_type_2"/>
</dbReference>
<dbReference type="InterPro" id="IPR009019">
    <property type="entry name" value="KH_sf_prok-type"/>
</dbReference>
<dbReference type="InterPro" id="IPR036419">
    <property type="entry name" value="Ribosomal_S3_C_sf"/>
</dbReference>
<dbReference type="InterPro" id="IPR005704">
    <property type="entry name" value="Ribosomal_uS3_bac-typ"/>
</dbReference>
<dbReference type="InterPro" id="IPR001351">
    <property type="entry name" value="Ribosomal_uS3_C"/>
</dbReference>
<dbReference type="InterPro" id="IPR018280">
    <property type="entry name" value="Ribosomal_uS3_CS"/>
</dbReference>
<dbReference type="NCBIfam" id="TIGR01009">
    <property type="entry name" value="rpsC_bact"/>
    <property type="match status" value="1"/>
</dbReference>
<dbReference type="PANTHER" id="PTHR11760">
    <property type="entry name" value="30S/40S RIBOSOMAL PROTEIN S3"/>
    <property type="match status" value="1"/>
</dbReference>
<dbReference type="PANTHER" id="PTHR11760:SF19">
    <property type="entry name" value="SMALL RIBOSOMAL SUBUNIT PROTEIN US3C"/>
    <property type="match status" value="1"/>
</dbReference>
<dbReference type="Pfam" id="PF07650">
    <property type="entry name" value="KH_2"/>
    <property type="match status" value="1"/>
</dbReference>
<dbReference type="Pfam" id="PF00189">
    <property type="entry name" value="Ribosomal_S3_C"/>
    <property type="match status" value="1"/>
</dbReference>
<dbReference type="SMART" id="SM00322">
    <property type="entry name" value="KH"/>
    <property type="match status" value="1"/>
</dbReference>
<dbReference type="SUPFAM" id="SSF54814">
    <property type="entry name" value="Prokaryotic type KH domain (KH-domain type II)"/>
    <property type="match status" value="1"/>
</dbReference>
<dbReference type="SUPFAM" id="SSF54821">
    <property type="entry name" value="Ribosomal protein S3 C-terminal domain"/>
    <property type="match status" value="1"/>
</dbReference>
<dbReference type="PROSITE" id="PS50823">
    <property type="entry name" value="KH_TYPE_2"/>
    <property type="match status" value="1"/>
</dbReference>
<dbReference type="PROSITE" id="PS00548">
    <property type="entry name" value="RIBOSOMAL_S3"/>
    <property type="match status" value="1"/>
</dbReference>
<comment type="function">
    <text evidence="1">Binds the lower part of the 30S subunit head. Binds mRNA in the 70S ribosome, positioning it for translation.</text>
</comment>
<comment type="subunit">
    <text evidence="1">Part of the 30S ribosomal subunit. Forms a tight complex with proteins S10 and S14.</text>
</comment>
<comment type="similarity">
    <text evidence="1">Belongs to the universal ribosomal protein uS3 family.</text>
</comment>
<gene>
    <name evidence="1" type="primary">rpsC</name>
    <name type="ordered locus">CLK_2918</name>
</gene>
<protein>
    <recommendedName>
        <fullName evidence="1">Small ribosomal subunit protein uS3</fullName>
    </recommendedName>
    <alternativeName>
        <fullName evidence="2">30S ribosomal protein S3</fullName>
    </alternativeName>
</protein>